<proteinExistence type="inferred from homology"/>
<keyword id="KW-0963">Cytoplasm</keyword>
<keyword id="KW-0378">Hydrolase</keyword>
<sequence>MIPGEVITPETDIELNVGRETLKVVVANLGDRPIQVGSHFHFYEANDALQFDREAVKGFRLNIAAGTAIRFEPGQSREVELVALAGKREVYGFAGRVMGKLD</sequence>
<name>URE2_ACIBC</name>
<protein>
    <recommendedName>
        <fullName evidence="1">Urease subunit beta</fullName>
        <ecNumber evidence="1">3.5.1.5</ecNumber>
    </recommendedName>
    <alternativeName>
        <fullName evidence="1">Urea amidohydrolase subunit beta</fullName>
    </alternativeName>
</protein>
<dbReference type="EC" id="3.5.1.5" evidence="1"/>
<dbReference type="EMBL" id="CP000863">
    <property type="protein sequence ID" value="ACC56285.1"/>
    <property type="molecule type" value="Genomic_DNA"/>
</dbReference>
<dbReference type="RefSeq" id="WP_000612142.1">
    <property type="nucleotide sequence ID" value="NZ_CP031380.1"/>
</dbReference>
<dbReference type="SMR" id="B2HVR9"/>
<dbReference type="KEGG" id="abc:ACICU_00973"/>
<dbReference type="HOGENOM" id="CLU_129707_1_1_6"/>
<dbReference type="UniPathway" id="UPA00258">
    <property type="reaction ID" value="UER00370"/>
</dbReference>
<dbReference type="Proteomes" id="UP000008839">
    <property type="component" value="Chromosome"/>
</dbReference>
<dbReference type="GO" id="GO:0035550">
    <property type="term" value="C:urease complex"/>
    <property type="evidence" value="ECO:0007669"/>
    <property type="project" value="InterPro"/>
</dbReference>
<dbReference type="GO" id="GO:0009039">
    <property type="term" value="F:urease activity"/>
    <property type="evidence" value="ECO:0007669"/>
    <property type="project" value="UniProtKB-UniRule"/>
</dbReference>
<dbReference type="GO" id="GO:0043419">
    <property type="term" value="P:urea catabolic process"/>
    <property type="evidence" value="ECO:0007669"/>
    <property type="project" value="UniProtKB-UniRule"/>
</dbReference>
<dbReference type="CDD" id="cd00407">
    <property type="entry name" value="Urease_beta"/>
    <property type="match status" value="1"/>
</dbReference>
<dbReference type="FunFam" id="2.10.150.10:FF:000001">
    <property type="entry name" value="Urease subunit beta"/>
    <property type="match status" value="1"/>
</dbReference>
<dbReference type="Gene3D" id="2.10.150.10">
    <property type="entry name" value="Urease, beta subunit"/>
    <property type="match status" value="1"/>
</dbReference>
<dbReference type="HAMAP" id="MF_01954">
    <property type="entry name" value="Urease_beta"/>
    <property type="match status" value="1"/>
</dbReference>
<dbReference type="InterPro" id="IPR002019">
    <property type="entry name" value="Urease_beta-like"/>
</dbReference>
<dbReference type="InterPro" id="IPR036461">
    <property type="entry name" value="Urease_betasu_sf"/>
</dbReference>
<dbReference type="InterPro" id="IPR050069">
    <property type="entry name" value="Urease_subunit"/>
</dbReference>
<dbReference type="NCBIfam" id="NF009682">
    <property type="entry name" value="PRK13203.1"/>
    <property type="match status" value="1"/>
</dbReference>
<dbReference type="NCBIfam" id="TIGR00192">
    <property type="entry name" value="urease_beta"/>
    <property type="match status" value="1"/>
</dbReference>
<dbReference type="PANTHER" id="PTHR33569">
    <property type="entry name" value="UREASE"/>
    <property type="match status" value="1"/>
</dbReference>
<dbReference type="PANTHER" id="PTHR33569:SF1">
    <property type="entry name" value="UREASE"/>
    <property type="match status" value="1"/>
</dbReference>
<dbReference type="Pfam" id="PF00699">
    <property type="entry name" value="Urease_beta"/>
    <property type="match status" value="1"/>
</dbReference>
<dbReference type="SUPFAM" id="SSF51278">
    <property type="entry name" value="Urease, beta-subunit"/>
    <property type="match status" value="1"/>
</dbReference>
<evidence type="ECO:0000255" key="1">
    <source>
        <dbReference type="HAMAP-Rule" id="MF_01954"/>
    </source>
</evidence>
<accession>B2HVR9</accession>
<reference key="1">
    <citation type="journal article" date="2008" name="Antimicrob. Agents Chemother.">
        <title>Whole-genome pyrosequencing of an epidemic multidrug-resistant Acinetobacter baumannii strain belonging to the European clone II group.</title>
        <authorList>
            <person name="Iacono M."/>
            <person name="Villa L."/>
            <person name="Fortini D."/>
            <person name="Bordoni R."/>
            <person name="Imperi F."/>
            <person name="Bonnal R.J."/>
            <person name="Sicheritz-Ponten T."/>
            <person name="De Bellis G."/>
            <person name="Visca P."/>
            <person name="Cassone A."/>
            <person name="Carattoli A."/>
        </authorList>
    </citation>
    <scope>NUCLEOTIDE SEQUENCE [LARGE SCALE GENOMIC DNA]</scope>
    <source>
        <strain>ACICU</strain>
    </source>
</reference>
<feature type="chain" id="PRO_1000188903" description="Urease subunit beta">
    <location>
        <begin position="1"/>
        <end position="102"/>
    </location>
</feature>
<comment type="catalytic activity">
    <reaction evidence="1">
        <text>urea + 2 H2O + H(+) = hydrogencarbonate + 2 NH4(+)</text>
        <dbReference type="Rhea" id="RHEA:20557"/>
        <dbReference type="ChEBI" id="CHEBI:15377"/>
        <dbReference type="ChEBI" id="CHEBI:15378"/>
        <dbReference type="ChEBI" id="CHEBI:16199"/>
        <dbReference type="ChEBI" id="CHEBI:17544"/>
        <dbReference type="ChEBI" id="CHEBI:28938"/>
        <dbReference type="EC" id="3.5.1.5"/>
    </reaction>
</comment>
<comment type="pathway">
    <text evidence="1">Nitrogen metabolism; urea degradation; CO(2) and NH(3) from urea (urease route): step 1/1.</text>
</comment>
<comment type="subunit">
    <text evidence="1">Heterotrimer of UreA (gamma), UreB (beta) and UreC (alpha) subunits. Three heterotrimers associate to form the active enzyme.</text>
</comment>
<comment type="subcellular location">
    <subcellularLocation>
        <location evidence="1">Cytoplasm</location>
    </subcellularLocation>
</comment>
<comment type="similarity">
    <text evidence="1">Belongs to the urease beta subunit family.</text>
</comment>
<organism>
    <name type="scientific">Acinetobacter baumannii (strain ACICU)</name>
    <dbReference type="NCBI Taxonomy" id="405416"/>
    <lineage>
        <taxon>Bacteria</taxon>
        <taxon>Pseudomonadati</taxon>
        <taxon>Pseudomonadota</taxon>
        <taxon>Gammaproteobacteria</taxon>
        <taxon>Moraxellales</taxon>
        <taxon>Moraxellaceae</taxon>
        <taxon>Acinetobacter</taxon>
        <taxon>Acinetobacter calcoaceticus/baumannii complex</taxon>
    </lineage>
</organism>
<gene>
    <name evidence="1" type="primary">ureB</name>
    <name type="ordered locus">ACICU_00973</name>
</gene>